<sequence length="234" mass="26458">MQTPSENTDVKMDTLDEPSAHLIEENVALPEDTFSSHLSYVLYEIAHCKPIMFMIIIIVSLISLIVLFHDNDGCTVILVMSLIVASMALMVVAAFTFGKAITEQEFMIKLLVEVIARKPAGKEWGTVAYNMNQYLFMKRLWYTPYYFYSGKKCHEFFTTLIKEVNSGSHSDSSSNSAEDTQSPVSAGKTSNGLNNFYSIRSDPILMAYVLKATQIEKEAQSEYWRKQYPDADLP</sequence>
<keyword id="KW-0967">Endosome</keyword>
<keyword id="KW-0333">Golgi apparatus</keyword>
<keyword id="KW-1017">Isopeptide bond</keyword>
<keyword id="KW-0472">Membrane</keyword>
<keyword id="KW-1185">Reference proteome</keyword>
<keyword id="KW-0812">Transmembrane</keyword>
<keyword id="KW-1133">Transmembrane helix</keyword>
<keyword id="KW-0832">Ubl conjugation</keyword>
<keyword id="KW-0926">Vacuole</keyword>
<reference key="1">
    <citation type="submission" date="1994-02" db="EMBL/GenBank/DDBJ databases">
        <title>Sequencing of chromosome I of Saccharomyces cerevisiae: analysis of the 52 Kbp CDC15-FLO1-PHO11-YAR074 region.</title>
        <authorList>
            <person name="Bussey H."/>
            <person name="Keng T."/>
            <person name="Storms R.K."/>
            <person name="Vo D."/>
            <person name="Zhong W."/>
            <person name="Fortin N."/>
            <person name="Barton A.B."/>
            <person name="Kaback D.B."/>
            <person name="Clark M.W."/>
        </authorList>
    </citation>
    <scope>NUCLEOTIDE SEQUENCE [GENOMIC DNA]</scope>
    <source>
        <strain>ATCC 204511 / S288c / AB972</strain>
    </source>
</reference>
<reference key="2">
    <citation type="journal article" date="1995" name="Proc. Natl. Acad. Sci. U.S.A.">
        <title>The nucleotide sequence of chromosome I from Saccharomyces cerevisiae.</title>
        <authorList>
            <person name="Bussey H."/>
            <person name="Kaback D.B."/>
            <person name="Zhong W.-W."/>
            <person name="Vo D.H."/>
            <person name="Clark M.W."/>
            <person name="Fortin N."/>
            <person name="Hall J."/>
            <person name="Ouellette B.F.F."/>
            <person name="Keng T."/>
            <person name="Barton A.B."/>
            <person name="Su Y."/>
            <person name="Davies C.J."/>
            <person name="Storms R.K."/>
        </authorList>
    </citation>
    <scope>NUCLEOTIDE SEQUENCE [LARGE SCALE GENOMIC DNA]</scope>
    <source>
        <strain>ATCC 204508 / S288c</strain>
    </source>
</reference>
<reference key="3">
    <citation type="journal article" date="2014" name="G3 (Bethesda)">
        <title>The reference genome sequence of Saccharomyces cerevisiae: Then and now.</title>
        <authorList>
            <person name="Engel S.R."/>
            <person name="Dietrich F.S."/>
            <person name="Fisk D.G."/>
            <person name="Binkley G."/>
            <person name="Balakrishnan R."/>
            <person name="Costanzo M.C."/>
            <person name="Dwight S.S."/>
            <person name="Hitz B.C."/>
            <person name="Karra K."/>
            <person name="Nash R.S."/>
            <person name="Weng S."/>
            <person name="Wong E.D."/>
            <person name="Lloyd P."/>
            <person name="Skrzypek M.S."/>
            <person name="Miyasato S.R."/>
            <person name="Simison M."/>
            <person name="Cherry J.M."/>
        </authorList>
    </citation>
    <scope>GENOME REANNOTATION</scope>
    <source>
        <strain>ATCC 204508 / S288c</strain>
    </source>
</reference>
<reference key="4">
    <citation type="journal article" date="2002" name="Microbiology">
        <title>Functional analysis of the Saccharomyces cerevisiae DUP240 multigene family reveals membrane-associated proteins that are not essential for cell viability.</title>
        <authorList>
            <person name="Poirey R."/>
            <person name="Despons L."/>
            <person name="Leh V."/>
            <person name="Lafuente M.-J."/>
            <person name="Potier S."/>
            <person name="Souciet J.-L."/>
            <person name="Jauniaux J.-C."/>
        </authorList>
    </citation>
    <scope>DISRUPTION PHENOTYPE</scope>
</reference>
<reference key="5">
    <citation type="journal article" date="2003" name="Nature">
        <title>Global analysis of protein expression in yeast.</title>
        <authorList>
            <person name="Ghaemmaghami S."/>
            <person name="Huh W.-K."/>
            <person name="Bower K."/>
            <person name="Howson R.W."/>
            <person name="Belle A."/>
            <person name="Dephoure N."/>
            <person name="O'Shea E.K."/>
            <person name="Weissman J.S."/>
        </authorList>
    </citation>
    <scope>LEVEL OF PROTEIN EXPRESSION [LARGE SCALE ANALYSIS]</scope>
</reference>
<reference key="6">
    <citation type="journal article" date="2003" name="Proc. Natl. Acad. Sci. U.S.A.">
        <title>A subset of membrane-associated proteins is ubiquitinated in response to mutations in the endoplasmic reticulum degradation machinery.</title>
        <authorList>
            <person name="Hitchcock A.L."/>
            <person name="Auld K."/>
            <person name="Gygi S.P."/>
            <person name="Silver P.A."/>
        </authorList>
    </citation>
    <scope>UBIQUITINATION [LARGE SCALE ANALYSIS] AT LYS-217</scope>
    <scope>IDENTIFICATION BY MASS SPECTROMETRY</scope>
</reference>
<reference key="7">
    <citation type="journal article" date="2006" name="Proc. Natl. Acad. Sci. U.S.A.">
        <title>A global topology map of the Saccharomyces cerevisiae membrane proteome.</title>
        <authorList>
            <person name="Kim H."/>
            <person name="Melen K."/>
            <person name="Oesterberg M."/>
            <person name="von Heijne G."/>
        </authorList>
    </citation>
    <scope>TOPOLOGY [LARGE SCALE ANALYSIS]</scope>
    <source>
        <strain>ATCC 208353 / W303-1A</strain>
    </source>
</reference>
<reference key="8">
    <citation type="journal article" date="2012" name="Proteomics">
        <title>Sites of ubiquitin attachment in Saccharomyces cerevisiae.</title>
        <authorList>
            <person name="Starita L.M."/>
            <person name="Lo R.S."/>
            <person name="Eng J.K."/>
            <person name="von Haller P.D."/>
            <person name="Fields S."/>
        </authorList>
    </citation>
    <scope>UBIQUITINATION [LARGE SCALE ANALYSIS] AT LYS-217</scope>
    <scope>IDENTIFICATION BY MASS SPECTROMETRY [LARGE SCALE ANALYSIS]</scope>
</reference>
<reference key="9">
    <citation type="journal article" date="2023" name="Proc. Natl. Acad. Sci. U.S.A.">
        <title>Discovery of a rapidly evolving yeast defense factor, KTD1, against the secreted killer toxin K28.</title>
        <authorList>
            <person name="Andreev I."/>
            <person name="Laidlaw K.M.E."/>
            <person name="Giovanetti S.M."/>
            <person name="Urtecho G."/>
            <person name="Shriner D."/>
            <person name="Bloom J.S."/>
            <person name="MacDonald C."/>
            <person name="Sadhu M.J."/>
        </authorList>
    </citation>
    <scope>FUNCTION</scope>
    <scope>SUBCELLULAR LOCATION</scope>
    <scope>DISRUPTION PHENOTYPE</scope>
</reference>
<evidence type="ECO:0000255" key="1"/>
<evidence type="ECO:0000256" key="2">
    <source>
        <dbReference type="SAM" id="MobiDB-lite"/>
    </source>
</evidence>
<evidence type="ECO:0000269" key="3">
    <source>
    </source>
</evidence>
<evidence type="ECO:0000269" key="4">
    <source>
    </source>
</evidence>
<evidence type="ECO:0000269" key="5">
    <source>
    </source>
</evidence>
<evidence type="ECO:0000303" key="6">
    <source>
    </source>
</evidence>
<evidence type="ECO:0000305" key="7"/>
<evidence type="ECO:0007744" key="8">
    <source>
    </source>
</evidence>
<accession>P39548</accession>
<accession>D6VPN0</accession>
<name>KTD1_YEAST</name>
<dbReference type="EMBL" id="L28920">
    <property type="protein sequence ID" value="AAC09490.1"/>
    <property type="molecule type" value="Genomic_DNA"/>
</dbReference>
<dbReference type="EMBL" id="BK006935">
    <property type="protein sequence ID" value="DAA07000.1"/>
    <property type="molecule type" value="Genomic_DNA"/>
</dbReference>
<dbReference type="PIR" id="S53480">
    <property type="entry name" value="S53480"/>
</dbReference>
<dbReference type="RefSeq" id="NP_009415.1">
    <property type="nucleotide sequence ID" value="NM_001178222.1"/>
</dbReference>
<dbReference type="BioGRID" id="31807">
    <property type="interactions" value="78"/>
</dbReference>
<dbReference type="DIP" id="DIP-7826N"/>
<dbReference type="FunCoup" id="P39548">
    <property type="interactions" value="51"/>
</dbReference>
<dbReference type="IntAct" id="P39548">
    <property type="interactions" value="8"/>
</dbReference>
<dbReference type="MINT" id="P39548"/>
<dbReference type="STRING" id="4932.YAR028W"/>
<dbReference type="iPTMnet" id="P39548"/>
<dbReference type="PaxDb" id="4932-YAR028W"/>
<dbReference type="PeptideAtlas" id="P39548"/>
<dbReference type="EnsemblFungi" id="YAR028W_mRNA">
    <property type="protein sequence ID" value="YAR028W"/>
    <property type="gene ID" value="YAR028W"/>
</dbReference>
<dbReference type="GeneID" id="851280"/>
<dbReference type="KEGG" id="sce:YAR028W"/>
<dbReference type="AGR" id="SGD:S000000076"/>
<dbReference type="SGD" id="S000000076">
    <property type="gene designation" value="KTD1"/>
</dbReference>
<dbReference type="VEuPathDB" id="FungiDB:YAR028W"/>
<dbReference type="eggNOG" id="ENOG502SSNW">
    <property type="taxonomic scope" value="Eukaryota"/>
</dbReference>
<dbReference type="GeneTree" id="ENSGT00940000176285"/>
<dbReference type="HOGENOM" id="CLU_081384_0_1_1"/>
<dbReference type="InParanoid" id="P39548"/>
<dbReference type="OMA" id="CHEFFTT"/>
<dbReference type="OrthoDB" id="4054584at2759"/>
<dbReference type="BioCyc" id="YEAST:G3O-28879-MONOMER"/>
<dbReference type="BioGRID-ORCS" id="851280">
    <property type="hits" value="1 hit in 10 CRISPR screens"/>
</dbReference>
<dbReference type="PRO" id="PR:P39548"/>
<dbReference type="Proteomes" id="UP000002311">
    <property type="component" value="Chromosome I"/>
</dbReference>
<dbReference type="RNAct" id="P39548">
    <property type="molecule type" value="protein"/>
</dbReference>
<dbReference type="GO" id="GO:0010008">
    <property type="term" value="C:endosome membrane"/>
    <property type="evidence" value="ECO:0007669"/>
    <property type="project" value="UniProtKB-SubCell"/>
</dbReference>
<dbReference type="GO" id="GO:0000329">
    <property type="term" value="C:fungal-type vacuole membrane"/>
    <property type="evidence" value="ECO:0000314"/>
    <property type="project" value="SGD"/>
</dbReference>
<dbReference type="GO" id="GO:0005794">
    <property type="term" value="C:Golgi apparatus"/>
    <property type="evidence" value="ECO:0007669"/>
    <property type="project" value="UniProtKB-SubCell"/>
</dbReference>
<dbReference type="GO" id="GO:0097237">
    <property type="term" value="P:cellular response to toxic substance"/>
    <property type="evidence" value="ECO:0000314"/>
    <property type="project" value="SGD"/>
</dbReference>
<dbReference type="InterPro" id="IPR001142">
    <property type="entry name" value="DUP/COS"/>
</dbReference>
<dbReference type="Pfam" id="PF00674">
    <property type="entry name" value="DUP"/>
    <property type="match status" value="1"/>
</dbReference>
<comment type="function">
    <text evidence="5">Confers resistance to killer toxin K28, a protein-toxin encoded by the M28 virus that uses S.cerevisiae as a host (PubMed:36800387). Probably acts against K28 after endocytosis of the protein-toxin (PubMed:36800387).</text>
</comment>
<comment type="subcellular location">
    <subcellularLocation>
        <location evidence="5">Vacuole membrane</location>
        <topology evidence="1">Multi-pass membrane protein</topology>
    </subcellularLocation>
    <subcellularLocation>
        <location evidence="5">Golgi apparatus</location>
        <location evidence="5">trans-Golgi network membrane</location>
        <topology evidence="1">Multi-pass membrane protein</topology>
    </subcellularLocation>
    <subcellularLocation>
        <location evidence="5">Endosome membrane</location>
        <topology evidence="1">Multi-pass membrane protein</topology>
    </subcellularLocation>
    <text evidence="5">Overexpressed protein is predominantly vacuolar. A small amount of protein also localizes to the cell periphery, possibly the cell membrane or cortical endoplasmic reticulum.</text>
</comment>
<comment type="disruption phenotype">
    <text evidence="3 5">Sensitive to K28 protein encoded by the M28 virus (PubMed:36800387). Cells lacking all 10 proteins of the DUP240 multigene family show no obvious alterations in mating, sporulation and cell growth (PubMed:12101299).</text>
</comment>
<comment type="miscellaneous">
    <text evidence="4">Present with 1835 molecules/cell in log phase SD medium.</text>
</comment>
<comment type="similarity">
    <text evidence="7">Belongs to the DUP/COS family.</text>
</comment>
<feature type="chain" id="PRO_0000207529" description="Protein-toxin resistance protein KTD1">
    <location>
        <begin position="1"/>
        <end position="234"/>
    </location>
</feature>
<feature type="topological domain" description="Cytoplasmic" evidence="1">
    <location>
        <begin position="1"/>
        <end position="47"/>
    </location>
</feature>
<feature type="transmembrane region" description="Helical" evidence="1">
    <location>
        <begin position="48"/>
        <end position="68"/>
    </location>
</feature>
<feature type="topological domain" description="Extracellular" evidence="1">
    <location>
        <begin position="69"/>
        <end position="76"/>
    </location>
</feature>
<feature type="transmembrane region" description="Helical" evidence="1">
    <location>
        <begin position="77"/>
        <end position="97"/>
    </location>
</feature>
<feature type="topological domain" description="Cytoplasmic" evidence="1">
    <location>
        <begin position="98"/>
        <end position="234"/>
    </location>
</feature>
<feature type="region of interest" description="Required for resistance to killer toxin K28, a protein-toxin encoded by the M28 virus" evidence="5">
    <location>
        <begin position="68"/>
        <end position="75"/>
    </location>
</feature>
<feature type="region of interest" description="Required for resistance to killer toxin K28, a protein-toxin encoded by the M28 virus" evidence="5">
    <location>
        <begin position="147"/>
        <end position="234"/>
    </location>
</feature>
<feature type="region of interest" description="Disordered" evidence="2">
    <location>
        <begin position="168"/>
        <end position="187"/>
    </location>
</feature>
<feature type="compositionally biased region" description="Polar residues" evidence="2">
    <location>
        <begin position="177"/>
        <end position="187"/>
    </location>
</feature>
<feature type="cross-link" description="Glycyl lysine isopeptide (Lys-Gly) (interchain with G-Cter in ubiquitin)" evidence="8">
    <location>
        <position position="217"/>
    </location>
</feature>
<organism>
    <name type="scientific">Saccharomyces cerevisiae (strain ATCC 204508 / S288c)</name>
    <name type="common">Baker's yeast</name>
    <dbReference type="NCBI Taxonomy" id="559292"/>
    <lineage>
        <taxon>Eukaryota</taxon>
        <taxon>Fungi</taxon>
        <taxon>Dikarya</taxon>
        <taxon>Ascomycota</taxon>
        <taxon>Saccharomycotina</taxon>
        <taxon>Saccharomycetes</taxon>
        <taxon>Saccharomycetales</taxon>
        <taxon>Saccharomycetaceae</taxon>
        <taxon>Saccharomyces</taxon>
    </lineage>
</organism>
<proteinExistence type="evidence at protein level"/>
<protein>
    <recommendedName>
        <fullName evidence="7">Protein-toxin resistance protein KTD1</fullName>
    </recommendedName>
    <alternativeName>
        <fullName evidence="6">Killer Toxin Defense 1</fullName>
    </alternativeName>
</protein>
<gene>
    <name evidence="6" type="primary">KTD1</name>
    <name type="ordered locus">YAR028W</name>
    <name type="ORF">FUN56</name>
</gene>